<protein>
    <recommendedName>
        <fullName evidence="1">N5-carboxyaminoimidazole ribonucleotide synthase</fullName>
        <shortName evidence="1">N5-CAIR synthase</shortName>
        <ecNumber evidence="1">6.3.4.18</ecNumber>
    </recommendedName>
    <alternativeName>
        <fullName evidence="1">5-(carboxyamino)imidazole ribonucleotide synthetase</fullName>
    </alternativeName>
</protein>
<accession>Q99V32</accession>
<keyword id="KW-0067">ATP-binding</keyword>
<keyword id="KW-0436">Ligase</keyword>
<keyword id="KW-0547">Nucleotide-binding</keyword>
<keyword id="KW-0658">Purine biosynthesis</keyword>
<feature type="chain" id="PRO_0000075004" description="N5-carboxyaminoimidazole ribonucleotide synthase">
    <location>
        <begin position="1"/>
        <end position="374"/>
    </location>
</feature>
<feature type="domain" description="ATP-grasp" evidence="1">
    <location>
        <begin position="112"/>
        <end position="296"/>
    </location>
</feature>
<feature type="binding site" evidence="1">
    <location>
        <position position="108"/>
    </location>
    <ligand>
        <name>ATP</name>
        <dbReference type="ChEBI" id="CHEBI:30616"/>
    </ligand>
</feature>
<feature type="binding site" evidence="1">
    <location>
        <position position="148"/>
    </location>
    <ligand>
        <name>ATP</name>
        <dbReference type="ChEBI" id="CHEBI:30616"/>
    </ligand>
</feature>
<feature type="binding site" evidence="1">
    <location>
        <begin position="153"/>
        <end position="159"/>
    </location>
    <ligand>
        <name>ATP</name>
        <dbReference type="ChEBI" id="CHEBI:30616"/>
    </ligand>
</feature>
<feature type="binding site" evidence="1">
    <location>
        <begin position="183"/>
        <end position="186"/>
    </location>
    <ligand>
        <name>ATP</name>
        <dbReference type="ChEBI" id="CHEBI:30616"/>
    </ligand>
</feature>
<feature type="binding site" evidence="1">
    <location>
        <position position="191"/>
    </location>
    <ligand>
        <name>ATP</name>
        <dbReference type="ChEBI" id="CHEBI:30616"/>
    </ligand>
</feature>
<feature type="binding site" evidence="1">
    <location>
        <position position="214"/>
    </location>
    <ligand>
        <name>ATP</name>
        <dbReference type="ChEBI" id="CHEBI:30616"/>
    </ligand>
</feature>
<feature type="binding site" evidence="1">
    <location>
        <begin position="266"/>
        <end position="267"/>
    </location>
    <ligand>
        <name>ATP</name>
        <dbReference type="ChEBI" id="CHEBI:30616"/>
    </ligand>
</feature>
<organism>
    <name type="scientific">Staphylococcus aureus (strain Mu50 / ATCC 700699)</name>
    <dbReference type="NCBI Taxonomy" id="158878"/>
    <lineage>
        <taxon>Bacteria</taxon>
        <taxon>Bacillati</taxon>
        <taxon>Bacillota</taxon>
        <taxon>Bacilli</taxon>
        <taxon>Bacillales</taxon>
        <taxon>Staphylococcaceae</taxon>
        <taxon>Staphylococcus</taxon>
    </lineage>
</organism>
<reference key="1">
    <citation type="journal article" date="2001" name="Lancet">
        <title>Whole genome sequencing of meticillin-resistant Staphylococcus aureus.</title>
        <authorList>
            <person name="Kuroda M."/>
            <person name="Ohta T."/>
            <person name="Uchiyama I."/>
            <person name="Baba T."/>
            <person name="Yuzawa H."/>
            <person name="Kobayashi I."/>
            <person name="Cui L."/>
            <person name="Oguchi A."/>
            <person name="Aoki K."/>
            <person name="Nagai Y."/>
            <person name="Lian J.-Q."/>
            <person name="Ito T."/>
            <person name="Kanamori M."/>
            <person name="Matsumaru H."/>
            <person name="Maruyama A."/>
            <person name="Murakami H."/>
            <person name="Hosoyama A."/>
            <person name="Mizutani-Ui Y."/>
            <person name="Takahashi N.K."/>
            <person name="Sawano T."/>
            <person name="Inoue R."/>
            <person name="Kaito C."/>
            <person name="Sekimizu K."/>
            <person name="Hirakawa H."/>
            <person name="Kuhara S."/>
            <person name="Goto S."/>
            <person name="Yabuzaki J."/>
            <person name="Kanehisa M."/>
            <person name="Yamashita A."/>
            <person name="Oshima K."/>
            <person name="Furuya K."/>
            <person name="Yoshino C."/>
            <person name="Shiba T."/>
            <person name="Hattori M."/>
            <person name="Ogasawara N."/>
            <person name="Hayashi H."/>
            <person name="Hiramatsu K."/>
        </authorList>
    </citation>
    <scope>NUCLEOTIDE SEQUENCE [LARGE SCALE GENOMIC DNA]</scope>
    <source>
        <strain>Mu50 / ATCC 700699</strain>
    </source>
</reference>
<comment type="function">
    <text evidence="1">Catalyzes the ATP-dependent conversion of 5-aminoimidazole ribonucleotide (AIR) and HCO(3)(-) to N5-carboxyaminoimidazole ribonucleotide (N5-CAIR).</text>
</comment>
<comment type="catalytic activity">
    <reaction evidence="1">
        <text>5-amino-1-(5-phospho-beta-D-ribosyl)imidazole + hydrogencarbonate + ATP = 5-carboxyamino-1-(5-phospho-D-ribosyl)imidazole + ADP + phosphate + 2 H(+)</text>
        <dbReference type="Rhea" id="RHEA:19317"/>
        <dbReference type="ChEBI" id="CHEBI:15378"/>
        <dbReference type="ChEBI" id="CHEBI:17544"/>
        <dbReference type="ChEBI" id="CHEBI:30616"/>
        <dbReference type="ChEBI" id="CHEBI:43474"/>
        <dbReference type="ChEBI" id="CHEBI:58730"/>
        <dbReference type="ChEBI" id="CHEBI:137981"/>
        <dbReference type="ChEBI" id="CHEBI:456216"/>
        <dbReference type="EC" id="6.3.4.18"/>
    </reaction>
</comment>
<comment type="pathway">
    <text evidence="1">Purine metabolism; IMP biosynthesis via de novo pathway; 5-amino-1-(5-phospho-D-ribosyl)imidazole-4-carboxylate from 5-amino-1-(5-phospho-D-ribosyl)imidazole (N5-CAIR route): step 1/2.</text>
</comment>
<comment type="subunit">
    <text evidence="1">Homodimer.</text>
</comment>
<comment type="similarity">
    <text evidence="1">Belongs to the PurK/PurT family.</text>
</comment>
<proteinExistence type="inferred from homology"/>
<name>PURK_STAAM</name>
<evidence type="ECO:0000255" key="1">
    <source>
        <dbReference type="HAMAP-Rule" id="MF_01928"/>
    </source>
</evidence>
<dbReference type="EC" id="6.3.4.18" evidence="1"/>
<dbReference type="EMBL" id="BA000017">
    <property type="protein sequence ID" value="BAB57227.1"/>
    <property type="molecule type" value="Genomic_DNA"/>
</dbReference>
<dbReference type="RefSeq" id="WP_001010413.1">
    <property type="nucleotide sequence ID" value="NC_002758.2"/>
</dbReference>
<dbReference type="SMR" id="Q99V32"/>
<dbReference type="KEGG" id="sav:SAV1065"/>
<dbReference type="HOGENOM" id="CLU_011534_0_1_9"/>
<dbReference type="PhylomeDB" id="Q99V32"/>
<dbReference type="UniPathway" id="UPA00074">
    <property type="reaction ID" value="UER00942"/>
</dbReference>
<dbReference type="Proteomes" id="UP000002481">
    <property type="component" value="Chromosome"/>
</dbReference>
<dbReference type="GO" id="GO:0005829">
    <property type="term" value="C:cytosol"/>
    <property type="evidence" value="ECO:0007669"/>
    <property type="project" value="TreeGrafter"/>
</dbReference>
<dbReference type="GO" id="GO:0034028">
    <property type="term" value="F:5-(carboxyamino)imidazole ribonucleotide synthase activity"/>
    <property type="evidence" value="ECO:0007669"/>
    <property type="project" value="UniProtKB-UniRule"/>
</dbReference>
<dbReference type="GO" id="GO:0005524">
    <property type="term" value="F:ATP binding"/>
    <property type="evidence" value="ECO:0007669"/>
    <property type="project" value="UniProtKB-KW"/>
</dbReference>
<dbReference type="GO" id="GO:0046872">
    <property type="term" value="F:metal ion binding"/>
    <property type="evidence" value="ECO:0007669"/>
    <property type="project" value="InterPro"/>
</dbReference>
<dbReference type="GO" id="GO:0004638">
    <property type="term" value="F:phosphoribosylaminoimidazole carboxylase activity"/>
    <property type="evidence" value="ECO:0007669"/>
    <property type="project" value="InterPro"/>
</dbReference>
<dbReference type="GO" id="GO:0006189">
    <property type="term" value="P:'de novo' IMP biosynthetic process"/>
    <property type="evidence" value="ECO:0007669"/>
    <property type="project" value="UniProtKB-UniRule"/>
</dbReference>
<dbReference type="FunFam" id="3.30.1490.20:FF:000015">
    <property type="entry name" value="N5-carboxyaminoimidazole ribonucleotide synthase"/>
    <property type="match status" value="1"/>
</dbReference>
<dbReference type="FunFam" id="3.40.50.20:FF:000016">
    <property type="entry name" value="N5-carboxyaminoimidazole ribonucleotide synthase"/>
    <property type="match status" value="1"/>
</dbReference>
<dbReference type="Gene3D" id="3.40.50.20">
    <property type="match status" value="1"/>
</dbReference>
<dbReference type="Gene3D" id="3.30.1490.20">
    <property type="entry name" value="ATP-grasp fold, A domain"/>
    <property type="match status" value="1"/>
</dbReference>
<dbReference type="Gene3D" id="3.30.470.20">
    <property type="entry name" value="ATP-grasp fold, B domain"/>
    <property type="match status" value="1"/>
</dbReference>
<dbReference type="HAMAP" id="MF_01928">
    <property type="entry name" value="PurK"/>
    <property type="match status" value="1"/>
</dbReference>
<dbReference type="InterPro" id="IPR011761">
    <property type="entry name" value="ATP-grasp"/>
</dbReference>
<dbReference type="InterPro" id="IPR003135">
    <property type="entry name" value="ATP-grasp_carboxylate-amine"/>
</dbReference>
<dbReference type="InterPro" id="IPR013815">
    <property type="entry name" value="ATP_grasp_subdomain_1"/>
</dbReference>
<dbReference type="InterPro" id="IPR016185">
    <property type="entry name" value="PreATP-grasp_dom_sf"/>
</dbReference>
<dbReference type="InterPro" id="IPR005875">
    <property type="entry name" value="PurK"/>
</dbReference>
<dbReference type="InterPro" id="IPR040686">
    <property type="entry name" value="PurK_C"/>
</dbReference>
<dbReference type="InterPro" id="IPR054350">
    <property type="entry name" value="PurT/PurK_preATP-grasp"/>
</dbReference>
<dbReference type="InterPro" id="IPR011054">
    <property type="entry name" value="Rudment_hybrid_motif"/>
</dbReference>
<dbReference type="NCBIfam" id="NF004675">
    <property type="entry name" value="PRK06019.1-1"/>
    <property type="match status" value="1"/>
</dbReference>
<dbReference type="NCBIfam" id="NF004676">
    <property type="entry name" value="PRK06019.1-2"/>
    <property type="match status" value="1"/>
</dbReference>
<dbReference type="NCBIfam" id="NF004679">
    <property type="entry name" value="PRK06019.1-5"/>
    <property type="match status" value="1"/>
</dbReference>
<dbReference type="NCBIfam" id="TIGR01161">
    <property type="entry name" value="purK"/>
    <property type="match status" value="1"/>
</dbReference>
<dbReference type="PANTHER" id="PTHR11609:SF5">
    <property type="entry name" value="PHOSPHORIBOSYLAMINOIMIDAZOLE CARBOXYLASE"/>
    <property type="match status" value="1"/>
</dbReference>
<dbReference type="PANTHER" id="PTHR11609">
    <property type="entry name" value="PURINE BIOSYNTHESIS PROTEIN 6/7, PUR6/7"/>
    <property type="match status" value="1"/>
</dbReference>
<dbReference type="Pfam" id="PF02222">
    <property type="entry name" value="ATP-grasp"/>
    <property type="match status" value="1"/>
</dbReference>
<dbReference type="Pfam" id="PF17769">
    <property type="entry name" value="PurK_C"/>
    <property type="match status" value="1"/>
</dbReference>
<dbReference type="Pfam" id="PF22660">
    <property type="entry name" value="RS_preATP-grasp-like"/>
    <property type="match status" value="1"/>
</dbReference>
<dbReference type="SUPFAM" id="SSF56059">
    <property type="entry name" value="Glutathione synthetase ATP-binding domain-like"/>
    <property type="match status" value="1"/>
</dbReference>
<dbReference type="SUPFAM" id="SSF52440">
    <property type="entry name" value="PreATP-grasp domain"/>
    <property type="match status" value="1"/>
</dbReference>
<dbReference type="SUPFAM" id="SSF51246">
    <property type="entry name" value="Rudiment single hybrid motif"/>
    <property type="match status" value="1"/>
</dbReference>
<dbReference type="PROSITE" id="PS50975">
    <property type="entry name" value="ATP_GRASP"/>
    <property type="match status" value="1"/>
</dbReference>
<gene>
    <name evidence="1" type="primary">purK</name>
    <name type="ordered locus">SAV1065</name>
</gene>
<sequence>MNFNKLKFGATIGIIGGGQLGKMMAQSAQKMGYKVVVLDPSEDCPCRYVAHEFIQAKYDDEKALNQLGQKCDVITYEFENISAQQLKLLCEKYNIPQGYQAIQLLQDRLTEKETLKSAGTKVVPFISVKESTDIDKAIETLGYPFIVKTRFGGYDGKGQVLINNEKDLQEGFKLIETSECVAEKYLNIKKEVSLTVTRGNNNQITFFPLQENEHRNQILFKTIVPARIDKTAEAKEQVNKIIQSIHFIGTFTVEFFIDSNNQLYVNEIAPRPHNSGHYSIEACDYSQFDTHILAVTGQSLPNSIELLKPAVMMNLLGKDLDLLENEFNEHPEWHLHIYGKSGRKDSRKMGHMTVLTNDVNQTEQDMYAKFEGSN</sequence>